<sequence length="292" mass="33654">MPELPEVETVRRGLEQKLNNFIIKKVEVCRDSTVAYPSNKEEFIKGLKNSLIYKWDRRGKYLIAQLKEVQNENTEFPLENSQNNGFLVVHLRMTGYFKFIENSTHPCKHTRIRFFDKNNNELRYVDVRSFGQMWWINKDLSINKVIKGLGSLGPEPFSKDFNANYLKEAISKRTKSIKAILLDQTIVAGIGNIYADESLYSAGISPFREARTIKKNELIKLKKSIVIVLKKSIGSGGTTFSDFRDLEGENGNFGLQTNVYRRTGRECRKCGNLIERQKITGRSTHWCPNCQK</sequence>
<reference key="1">
    <citation type="journal article" date="2007" name="PLoS Genet.">
        <title>Patterns and implications of gene gain and loss in the evolution of Prochlorococcus.</title>
        <authorList>
            <person name="Kettler G.C."/>
            <person name="Martiny A.C."/>
            <person name="Huang K."/>
            <person name="Zucker J."/>
            <person name="Coleman M.L."/>
            <person name="Rodrigue S."/>
            <person name="Chen F."/>
            <person name="Lapidus A."/>
            <person name="Ferriera S."/>
            <person name="Johnson J."/>
            <person name="Steglich C."/>
            <person name="Church G.M."/>
            <person name="Richardson P."/>
            <person name="Chisholm S.W."/>
        </authorList>
    </citation>
    <scope>NUCLEOTIDE SEQUENCE [LARGE SCALE GENOMIC DNA]</scope>
    <source>
        <strain>MIT 9301</strain>
    </source>
</reference>
<accession>A3PB53</accession>
<dbReference type="EC" id="3.2.2.23" evidence="2"/>
<dbReference type="EC" id="4.2.99.18" evidence="2"/>
<dbReference type="EMBL" id="CP000576">
    <property type="protein sequence ID" value="ABO16978.1"/>
    <property type="molecule type" value="Genomic_DNA"/>
</dbReference>
<dbReference type="RefSeq" id="WP_011862363.1">
    <property type="nucleotide sequence ID" value="NC_009091.1"/>
</dbReference>
<dbReference type="SMR" id="A3PB53"/>
<dbReference type="STRING" id="167546.P9301_03551"/>
<dbReference type="KEGG" id="pmg:P9301_03551"/>
<dbReference type="eggNOG" id="COG0266">
    <property type="taxonomic scope" value="Bacteria"/>
</dbReference>
<dbReference type="HOGENOM" id="CLU_038423_1_2_3"/>
<dbReference type="OrthoDB" id="9800855at2"/>
<dbReference type="Proteomes" id="UP000001430">
    <property type="component" value="Chromosome"/>
</dbReference>
<dbReference type="GO" id="GO:0034039">
    <property type="term" value="F:8-oxo-7,8-dihydroguanine DNA N-glycosylase activity"/>
    <property type="evidence" value="ECO:0007669"/>
    <property type="project" value="TreeGrafter"/>
</dbReference>
<dbReference type="GO" id="GO:0140078">
    <property type="term" value="F:class I DNA-(apurinic or apyrimidinic site) endonuclease activity"/>
    <property type="evidence" value="ECO:0007669"/>
    <property type="project" value="UniProtKB-EC"/>
</dbReference>
<dbReference type="GO" id="GO:0003684">
    <property type="term" value="F:damaged DNA binding"/>
    <property type="evidence" value="ECO:0007669"/>
    <property type="project" value="InterPro"/>
</dbReference>
<dbReference type="GO" id="GO:0008270">
    <property type="term" value="F:zinc ion binding"/>
    <property type="evidence" value="ECO:0007669"/>
    <property type="project" value="UniProtKB-UniRule"/>
</dbReference>
<dbReference type="GO" id="GO:0006284">
    <property type="term" value="P:base-excision repair"/>
    <property type="evidence" value="ECO:0007669"/>
    <property type="project" value="InterPro"/>
</dbReference>
<dbReference type="CDD" id="cd08966">
    <property type="entry name" value="EcFpg-like_N"/>
    <property type="match status" value="1"/>
</dbReference>
<dbReference type="FunFam" id="1.10.8.50:FF:000003">
    <property type="entry name" value="Formamidopyrimidine-DNA glycosylase"/>
    <property type="match status" value="1"/>
</dbReference>
<dbReference type="Gene3D" id="1.10.8.50">
    <property type="match status" value="1"/>
</dbReference>
<dbReference type="Gene3D" id="3.20.190.10">
    <property type="entry name" value="MutM-like, N-terminal"/>
    <property type="match status" value="1"/>
</dbReference>
<dbReference type="HAMAP" id="MF_00103">
    <property type="entry name" value="Fapy_DNA_glycosyl"/>
    <property type="match status" value="1"/>
</dbReference>
<dbReference type="InterPro" id="IPR015886">
    <property type="entry name" value="DNA_glyclase/AP_lyase_DNA-bd"/>
</dbReference>
<dbReference type="InterPro" id="IPR015887">
    <property type="entry name" value="DNA_glyclase_Znf_dom_DNA_BS"/>
</dbReference>
<dbReference type="InterPro" id="IPR020629">
    <property type="entry name" value="Formamido-pyr_DNA_Glyclase"/>
</dbReference>
<dbReference type="InterPro" id="IPR012319">
    <property type="entry name" value="FPG_cat"/>
</dbReference>
<dbReference type="InterPro" id="IPR035937">
    <property type="entry name" value="MutM-like_N-ter"/>
</dbReference>
<dbReference type="InterPro" id="IPR010979">
    <property type="entry name" value="Ribosomal_uS13-like_H2TH"/>
</dbReference>
<dbReference type="InterPro" id="IPR000214">
    <property type="entry name" value="Znf_DNA_glyclase/AP_lyase"/>
</dbReference>
<dbReference type="InterPro" id="IPR010663">
    <property type="entry name" value="Znf_FPG/IleRS"/>
</dbReference>
<dbReference type="NCBIfam" id="TIGR00577">
    <property type="entry name" value="fpg"/>
    <property type="match status" value="1"/>
</dbReference>
<dbReference type="NCBIfam" id="NF002211">
    <property type="entry name" value="PRK01103.1"/>
    <property type="match status" value="1"/>
</dbReference>
<dbReference type="NCBIfam" id="NF010551">
    <property type="entry name" value="PRK13945.1"/>
    <property type="match status" value="1"/>
</dbReference>
<dbReference type="PANTHER" id="PTHR22993">
    <property type="entry name" value="FORMAMIDOPYRIMIDINE-DNA GLYCOSYLASE"/>
    <property type="match status" value="1"/>
</dbReference>
<dbReference type="PANTHER" id="PTHR22993:SF9">
    <property type="entry name" value="FORMAMIDOPYRIMIDINE-DNA GLYCOSYLASE"/>
    <property type="match status" value="1"/>
</dbReference>
<dbReference type="Pfam" id="PF01149">
    <property type="entry name" value="Fapy_DNA_glyco"/>
    <property type="match status" value="1"/>
</dbReference>
<dbReference type="Pfam" id="PF06831">
    <property type="entry name" value="H2TH"/>
    <property type="match status" value="1"/>
</dbReference>
<dbReference type="Pfam" id="PF06827">
    <property type="entry name" value="zf-FPG_IleRS"/>
    <property type="match status" value="1"/>
</dbReference>
<dbReference type="SMART" id="SM00898">
    <property type="entry name" value="Fapy_DNA_glyco"/>
    <property type="match status" value="1"/>
</dbReference>
<dbReference type="SMART" id="SM01232">
    <property type="entry name" value="H2TH"/>
    <property type="match status" value="1"/>
</dbReference>
<dbReference type="SUPFAM" id="SSF57716">
    <property type="entry name" value="Glucocorticoid receptor-like (DNA-binding domain)"/>
    <property type="match status" value="1"/>
</dbReference>
<dbReference type="SUPFAM" id="SSF81624">
    <property type="entry name" value="N-terminal domain of MutM-like DNA repair proteins"/>
    <property type="match status" value="1"/>
</dbReference>
<dbReference type="SUPFAM" id="SSF46946">
    <property type="entry name" value="S13-like H2TH domain"/>
    <property type="match status" value="1"/>
</dbReference>
<dbReference type="PROSITE" id="PS51068">
    <property type="entry name" value="FPG_CAT"/>
    <property type="match status" value="1"/>
</dbReference>
<dbReference type="PROSITE" id="PS01242">
    <property type="entry name" value="ZF_FPG_1"/>
    <property type="match status" value="1"/>
</dbReference>
<dbReference type="PROSITE" id="PS51066">
    <property type="entry name" value="ZF_FPG_2"/>
    <property type="match status" value="1"/>
</dbReference>
<organism>
    <name type="scientific">Prochlorococcus marinus (strain MIT 9301)</name>
    <dbReference type="NCBI Taxonomy" id="167546"/>
    <lineage>
        <taxon>Bacteria</taxon>
        <taxon>Bacillati</taxon>
        <taxon>Cyanobacteriota</taxon>
        <taxon>Cyanophyceae</taxon>
        <taxon>Synechococcales</taxon>
        <taxon>Prochlorococcaceae</taxon>
        <taxon>Prochlorococcus</taxon>
    </lineage>
</organism>
<comment type="function">
    <text evidence="2">Involved in base excision repair of DNA damaged by oxidation or by mutagenic agents. Acts as a DNA glycosylase that recognizes and removes damaged bases. Has a preference for oxidized purines, such as 7,8-dihydro-8-oxoguanine (8-oxoG). Has AP (apurinic/apyrimidinic) lyase activity and introduces nicks in the DNA strand. Cleaves the DNA backbone by beta-delta elimination to generate a single-strand break at the site of the removed base with both 3'- and 5'-phosphates.</text>
</comment>
<comment type="catalytic activity">
    <reaction evidence="2">
        <text>Hydrolysis of DNA containing ring-opened 7-methylguanine residues, releasing 2,6-diamino-4-hydroxy-5-(N-methyl)formamidopyrimidine.</text>
        <dbReference type="EC" id="3.2.2.23"/>
    </reaction>
</comment>
<comment type="catalytic activity">
    <reaction evidence="2">
        <text>2'-deoxyribonucleotide-(2'-deoxyribose 5'-phosphate)-2'-deoxyribonucleotide-DNA = a 3'-end 2'-deoxyribonucleotide-(2,3-dehydro-2,3-deoxyribose 5'-phosphate)-DNA + a 5'-end 5'-phospho-2'-deoxyribonucleoside-DNA + H(+)</text>
        <dbReference type="Rhea" id="RHEA:66592"/>
        <dbReference type="Rhea" id="RHEA-COMP:13180"/>
        <dbReference type="Rhea" id="RHEA-COMP:16897"/>
        <dbReference type="Rhea" id="RHEA-COMP:17067"/>
        <dbReference type="ChEBI" id="CHEBI:15378"/>
        <dbReference type="ChEBI" id="CHEBI:136412"/>
        <dbReference type="ChEBI" id="CHEBI:157695"/>
        <dbReference type="ChEBI" id="CHEBI:167181"/>
        <dbReference type="EC" id="4.2.99.18"/>
    </reaction>
</comment>
<comment type="cofactor">
    <cofactor evidence="2">
        <name>Zn(2+)</name>
        <dbReference type="ChEBI" id="CHEBI:29105"/>
    </cofactor>
    <text evidence="2">Binds 1 zinc ion per subunit.</text>
</comment>
<comment type="subunit">
    <text evidence="2">Monomer.</text>
</comment>
<comment type="similarity">
    <text evidence="2">Belongs to the FPG family.</text>
</comment>
<proteinExistence type="inferred from homology"/>
<protein>
    <recommendedName>
        <fullName evidence="2">Formamidopyrimidine-DNA glycosylase</fullName>
        <shortName evidence="2">Fapy-DNA glycosylase</shortName>
        <ecNumber evidence="2">3.2.2.23</ecNumber>
    </recommendedName>
    <alternativeName>
        <fullName evidence="2">DNA-(apurinic or apyrimidinic site) lyase MutM</fullName>
        <shortName evidence="2">AP lyase MutM</shortName>
        <ecNumber evidence="2">4.2.99.18</ecNumber>
    </alternativeName>
</protein>
<gene>
    <name evidence="2" type="primary">mutM</name>
    <name evidence="2" type="synonym">fpg</name>
    <name type="ordered locus">P9301_03551</name>
</gene>
<feature type="initiator methionine" description="Removed" evidence="1">
    <location>
        <position position="1"/>
    </location>
</feature>
<feature type="chain" id="PRO_1000008735" description="Formamidopyrimidine-DNA glycosylase">
    <location>
        <begin position="2"/>
        <end position="292"/>
    </location>
</feature>
<feature type="zinc finger region" description="FPG-type" evidence="2">
    <location>
        <begin position="258"/>
        <end position="292"/>
    </location>
</feature>
<feature type="active site" description="Schiff-base intermediate with DNA" evidence="2">
    <location>
        <position position="2"/>
    </location>
</feature>
<feature type="active site" description="Proton donor" evidence="2">
    <location>
        <position position="3"/>
    </location>
</feature>
<feature type="active site" description="Proton donor; for beta-elimination activity" evidence="2">
    <location>
        <position position="60"/>
    </location>
</feature>
<feature type="active site" description="Proton donor; for delta-elimination activity" evidence="2">
    <location>
        <position position="282"/>
    </location>
</feature>
<feature type="binding site" evidence="2">
    <location>
        <position position="109"/>
    </location>
    <ligand>
        <name>DNA</name>
        <dbReference type="ChEBI" id="CHEBI:16991"/>
    </ligand>
</feature>
<feature type="binding site" evidence="2">
    <location>
        <position position="128"/>
    </location>
    <ligand>
        <name>DNA</name>
        <dbReference type="ChEBI" id="CHEBI:16991"/>
    </ligand>
</feature>
<feature type="binding site" evidence="2">
    <location>
        <position position="173"/>
    </location>
    <ligand>
        <name>DNA</name>
        <dbReference type="ChEBI" id="CHEBI:16991"/>
    </ligand>
</feature>
<evidence type="ECO:0000250" key="1"/>
<evidence type="ECO:0000255" key="2">
    <source>
        <dbReference type="HAMAP-Rule" id="MF_00103"/>
    </source>
</evidence>
<keyword id="KW-0227">DNA damage</keyword>
<keyword id="KW-0234">DNA repair</keyword>
<keyword id="KW-0238">DNA-binding</keyword>
<keyword id="KW-0326">Glycosidase</keyword>
<keyword id="KW-0378">Hydrolase</keyword>
<keyword id="KW-0456">Lyase</keyword>
<keyword id="KW-0479">Metal-binding</keyword>
<keyword id="KW-0511">Multifunctional enzyme</keyword>
<keyword id="KW-1185">Reference proteome</keyword>
<keyword id="KW-0862">Zinc</keyword>
<keyword id="KW-0863">Zinc-finger</keyword>
<name>FPG_PROM0</name>